<accession>Q9BPE6</accession>
<proteinExistence type="inferred from homology"/>
<comment type="subcellular location">
    <subcellularLocation>
        <location evidence="5">Secreted</location>
    </subcellularLocation>
</comment>
<comment type="tissue specificity">
    <text evidence="5">Expressed by the venom duct.</text>
</comment>
<comment type="domain">
    <text evidence="4">The cysteine framework is V (CC-CC).</text>
</comment>
<comment type="PTM">
    <text evidence="4">Contains 2 disulfide bonds that can be either 'C1-C3, C2-C4' or 'C1-C4, C2-C3', since these disulfide connectivities have been observed for conotoxins with cysteine framework V (for examples, see AC P0DQQ7 and AC P81755).</text>
</comment>
<comment type="similarity">
    <text evidence="4">Belongs to the conotoxin T superfamily.</text>
</comment>
<protein>
    <recommendedName>
        <fullName evidence="2">Conotoxin Ts-011</fullName>
    </recommendedName>
    <alternativeName>
        <fullName evidence="6">Conotoxin TsMRCL-02</fullName>
    </alternativeName>
</protein>
<dbReference type="EMBL" id="AF214984">
    <property type="protein sequence ID" value="AAG60412.1"/>
    <property type="molecule type" value="mRNA"/>
</dbReference>
<dbReference type="GO" id="GO:0005576">
    <property type="term" value="C:extracellular region"/>
    <property type="evidence" value="ECO:0007669"/>
    <property type="project" value="UniProtKB-SubCell"/>
</dbReference>
<dbReference type="GO" id="GO:0090729">
    <property type="term" value="F:toxin activity"/>
    <property type="evidence" value="ECO:0007669"/>
    <property type="project" value="UniProtKB-KW"/>
</dbReference>
<dbReference type="InterPro" id="IPR031565">
    <property type="entry name" value="T-conotoxin"/>
</dbReference>
<dbReference type="Pfam" id="PF16981">
    <property type="entry name" value="Chi-conotoxin"/>
    <property type="match status" value="1"/>
</dbReference>
<keyword id="KW-0027">Amidation</keyword>
<keyword id="KW-1015">Disulfide bond</keyword>
<keyword id="KW-0528">Neurotoxin</keyword>
<keyword id="KW-0964">Secreted</keyword>
<keyword id="KW-0732">Signal</keyword>
<keyword id="KW-0800">Toxin</keyword>
<sequence>MHCLPVPVILLLLIASTPSVDARPKTKDDVPPASFHGADNANRILRTLWNLRGCCEDKTCCFIG</sequence>
<evidence type="ECO:0000250" key="1"/>
<evidence type="ECO:0000250" key="2">
    <source>
        <dbReference type="UniProtKB" id="Q9BH75"/>
    </source>
</evidence>
<evidence type="ECO:0000255" key="3"/>
<evidence type="ECO:0000305" key="4"/>
<evidence type="ECO:0000305" key="5">
    <source>
    </source>
</evidence>
<evidence type="ECO:0000312" key="6">
    <source>
        <dbReference type="EMBL" id="AAG60412.1"/>
    </source>
</evidence>
<organism>
    <name type="scientific">Conus tessulatus</name>
    <name type="common">Tessellate cone</name>
    <dbReference type="NCBI Taxonomy" id="101317"/>
    <lineage>
        <taxon>Eukaryota</taxon>
        <taxon>Metazoa</taxon>
        <taxon>Spiralia</taxon>
        <taxon>Lophotrochozoa</taxon>
        <taxon>Mollusca</taxon>
        <taxon>Gastropoda</taxon>
        <taxon>Caenogastropoda</taxon>
        <taxon>Neogastropoda</taxon>
        <taxon>Conoidea</taxon>
        <taxon>Conidae</taxon>
        <taxon>Conus</taxon>
        <taxon>Tesselliconus</taxon>
    </lineage>
</organism>
<reference key="1">
    <citation type="journal article" date="2001" name="Mol. Biol. Evol.">
        <title>Mechanisms for evolving hypervariability: the case of conopeptides.</title>
        <authorList>
            <person name="Conticello S.G."/>
            <person name="Gilad Y."/>
            <person name="Avidan N."/>
            <person name="Ben-Asher E."/>
            <person name="Levy Z."/>
            <person name="Fainzilber M."/>
        </authorList>
    </citation>
    <scope>NUCLEOTIDE SEQUENCE [MRNA]</scope>
    <source>
        <tissue>Venom duct</tissue>
    </source>
</reference>
<name>CT5B_CONTS</name>
<feature type="signal peptide" evidence="3">
    <location>
        <begin position="1"/>
        <end position="22"/>
    </location>
</feature>
<feature type="propeptide" id="PRO_0000404930" evidence="1">
    <location>
        <begin position="23"/>
        <end position="51"/>
    </location>
</feature>
<feature type="peptide" id="PRO_0000404931" description="Conotoxin Ts-011">
    <location>
        <begin position="53"/>
        <end position="63"/>
    </location>
</feature>
<feature type="modified residue" description="Isoleucine amide" evidence="1">
    <location>
        <position position="63"/>
    </location>
</feature>